<evidence type="ECO:0000255" key="1">
    <source>
        <dbReference type="HAMAP-Rule" id="MF_00385"/>
    </source>
</evidence>
<evidence type="ECO:0000305" key="2"/>
<organism>
    <name type="scientific">Helicobacter pylori (strain HPAG1)</name>
    <dbReference type="NCBI Taxonomy" id="357544"/>
    <lineage>
        <taxon>Bacteria</taxon>
        <taxon>Pseudomonadati</taxon>
        <taxon>Campylobacterota</taxon>
        <taxon>Epsilonproteobacteria</taxon>
        <taxon>Campylobacterales</taxon>
        <taxon>Helicobacteraceae</taxon>
        <taxon>Helicobacter</taxon>
    </lineage>
</organism>
<dbReference type="EMBL" id="CP000241">
    <property type="protein sequence ID" value="ABF85157.1"/>
    <property type="molecule type" value="Genomic_DNA"/>
</dbReference>
<dbReference type="RefSeq" id="WP_000216129.1">
    <property type="nucleotide sequence ID" value="NC_008086.1"/>
</dbReference>
<dbReference type="SMR" id="Q1CSB5"/>
<dbReference type="KEGG" id="hpa:HPAG1_1090"/>
<dbReference type="HOGENOM" id="CLU_100590_5_1_7"/>
<dbReference type="GO" id="GO:0005737">
    <property type="term" value="C:cytoplasm"/>
    <property type="evidence" value="ECO:0007669"/>
    <property type="project" value="UniProtKB-ARBA"/>
</dbReference>
<dbReference type="GO" id="GO:0015935">
    <property type="term" value="C:small ribosomal subunit"/>
    <property type="evidence" value="ECO:0007669"/>
    <property type="project" value="TreeGrafter"/>
</dbReference>
<dbReference type="GO" id="GO:0003735">
    <property type="term" value="F:structural constituent of ribosome"/>
    <property type="evidence" value="ECO:0007669"/>
    <property type="project" value="InterPro"/>
</dbReference>
<dbReference type="GO" id="GO:0006412">
    <property type="term" value="P:translation"/>
    <property type="evidence" value="ECO:0007669"/>
    <property type="project" value="UniProtKB-UniRule"/>
</dbReference>
<dbReference type="FunFam" id="3.30.1320.10:FF:000005">
    <property type="entry name" value="30S ribosomal protein S16"/>
    <property type="match status" value="1"/>
</dbReference>
<dbReference type="Gene3D" id="3.30.1320.10">
    <property type="match status" value="1"/>
</dbReference>
<dbReference type="HAMAP" id="MF_00385">
    <property type="entry name" value="Ribosomal_bS16"/>
    <property type="match status" value="1"/>
</dbReference>
<dbReference type="InterPro" id="IPR000307">
    <property type="entry name" value="Ribosomal_bS16"/>
</dbReference>
<dbReference type="InterPro" id="IPR020592">
    <property type="entry name" value="Ribosomal_bS16_CS"/>
</dbReference>
<dbReference type="InterPro" id="IPR023803">
    <property type="entry name" value="Ribosomal_bS16_dom_sf"/>
</dbReference>
<dbReference type="NCBIfam" id="TIGR00002">
    <property type="entry name" value="S16"/>
    <property type="match status" value="1"/>
</dbReference>
<dbReference type="PANTHER" id="PTHR12919">
    <property type="entry name" value="30S RIBOSOMAL PROTEIN S16"/>
    <property type="match status" value="1"/>
</dbReference>
<dbReference type="PANTHER" id="PTHR12919:SF20">
    <property type="entry name" value="SMALL RIBOSOMAL SUBUNIT PROTEIN BS16M"/>
    <property type="match status" value="1"/>
</dbReference>
<dbReference type="Pfam" id="PF00886">
    <property type="entry name" value="Ribosomal_S16"/>
    <property type="match status" value="1"/>
</dbReference>
<dbReference type="SUPFAM" id="SSF54565">
    <property type="entry name" value="Ribosomal protein S16"/>
    <property type="match status" value="1"/>
</dbReference>
<dbReference type="PROSITE" id="PS00732">
    <property type="entry name" value="RIBOSOMAL_S16"/>
    <property type="match status" value="1"/>
</dbReference>
<accession>Q1CSB5</accession>
<sequence>MTVIRLTRIGRKKKPFYRVVVTDSRKRRDGGWIESIGYYNPLSEPKDIKIDKERLNYWKSVGAKMSERVEKLSQKA</sequence>
<gene>
    <name evidence="1" type="primary">rpsP</name>
    <name type="ordered locus">HPAG1_1090</name>
</gene>
<name>RS16_HELPH</name>
<feature type="chain" id="PRO_1000049268" description="Small ribosomal subunit protein bS16">
    <location>
        <begin position="1"/>
        <end position="76"/>
    </location>
</feature>
<comment type="similarity">
    <text evidence="1">Belongs to the bacterial ribosomal protein bS16 family.</text>
</comment>
<reference key="1">
    <citation type="journal article" date="2006" name="Proc. Natl. Acad. Sci. U.S.A.">
        <title>The complete genome sequence of a chronic atrophic gastritis Helicobacter pylori strain: evolution during disease progression.</title>
        <authorList>
            <person name="Oh J.D."/>
            <person name="Kling-Baeckhed H."/>
            <person name="Giannakis M."/>
            <person name="Xu J."/>
            <person name="Fulton R.S."/>
            <person name="Fulton L.A."/>
            <person name="Cordum H.S."/>
            <person name="Wang C."/>
            <person name="Elliott G."/>
            <person name="Edwards J."/>
            <person name="Mardis E.R."/>
            <person name="Engstrand L.G."/>
            <person name="Gordon J.I."/>
        </authorList>
    </citation>
    <scope>NUCLEOTIDE SEQUENCE [LARGE SCALE GENOMIC DNA]</scope>
    <source>
        <strain>HPAG1</strain>
    </source>
</reference>
<keyword id="KW-0687">Ribonucleoprotein</keyword>
<keyword id="KW-0689">Ribosomal protein</keyword>
<proteinExistence type="inferred from homology"/>
<protein>
    <recommendedName>
        <fullName evidence="1">Small ribosomal subunit protein bS16</fullName>
    </recommendedName>
    <alternativeName>
        <fullName evidence="2">30S ribosomal protein S16</fullName>
    </alternativeName>
</protein>